<evidence type="ECO:0000255" key="1">
    <source>
        <dbReference type="HAMAP-Rule" id="MF_00316"/>
    </source>
</evidence>
<organism>
    <name type="scientific">Synechococcus sp. (strain ATCC 27144 / PCC 6301 / SAUG 1402/1)</name>
    <name type="common">Anacystis nidulans</name>
    <dbReference type="NCBI Taxonomy" id="269084"/>
    <lineage>
        <taxon>Bacteria</taxon>
        <taxon>Bacillati</taxon>
        <taxon>Cyanobacteriota</taxon>
        <taxon>Cyanophyceae</taxon>
        <taxon>Synechococcales</taxon>
        <taxon>Synechococcaceae</taxon>
        <taxon>Synechococcus</taxon>
    </lineage>
</organism>
<sequence>MNFAALILAGGSSRRMGQDKALLRLNGEPLLIRTSRIAAAVCDSVWICSPEPDRYQSLLSQPVQWLTEPQPTGPQGPLTALAWALPQIDADWILLLACDLPRLAIAPLQAWRQQVELLPEDCRAAIARTEQGWEPLIGFYRPAIAPTIAPWLSQGRRDFQGWLATVAVQELPLSDRDWLVNCNTPTDWQALQLS</sequence>
<reference key="1">
    <citation type="journal article" date="2007" name="Photosyn. Res.">
        <title>Complete nucleotide sequence of the freshwater unicellular cyanobacterium Synechococcus elongatus PCC 6301 chromosome: gene content and organization.</title>
        <authorList>
            <person name="Sugita C."/>
            <person name="Ogata K."/>
            <person name="Shikata M."/>
            <person name="Jikuya H."/>
            <person name="Takano J."/>
            <person name="Furumichi M."/>
            <person name="Kanehisa M."/>
            <person name="Omata T."/>
            <person name="Sugiura M."/>
            <person name="Sugita M."/>
        </authorList>
    </citation>
    <scope>NUCLEOTIDE SEQUENCE [LARGE SCALE GENOMIC DNA]</scope>
    <source>
        <strain>ATCC 27144 / PCC 6301 / SAUG 1402/1</strain>
    </source>
</reference>
<protein>
    <recommendedName>
        <fullName evidence="1">Probable molybdenum cofactor guanylyltransferase</fullName>
        <shortName evidence="1">MoCo guanylyltransferase</shortName>
        <ecNumber evidence="1">2.7.7.77</ecNumber>
    </recommendedName>
    <alternativeName>
        <fullName evidence="1">GTP:molybdopterin guanylyltransferase</fullName>
    </alternativeName>
    <alternativeName>
        <fullName evidence="1">Mo-MPT guanylyltransferase</fullName>
    </alternativeName>
    <alternativeName>
        <fullName evidence="1">Molybdopterin guanylyltransferase</fullName>
    </alternativeName>
    <alternativeName>
        <fullName evidence="1">Molybdopterin-guanine dinucleotide synthase</fullName>
        <shortName evidence="1">MGD synthase</shortName>
    </alternativeName>
</protein>
<dbReference type="EC" id="2.7.7.77" evidence="1"/>
<dbReference type="EMBL" id="AP008231">
    <property type="protein sequence ID" value="BAD78551.1"/>
    <property type="molecule type" value="Genomic_DNA"/>
</dbReference>
<dbReference type="RefSeq" id="WP_011242674.1">
    <property type="nucleotide sequence ID" value="NZ_CP085785.1"/>
</dbReference>
<dbReference type="SMR" id="Q5N568"/>
<dbReference type="KEGG" id="syc:syc0361_d"/>
<dbReference type="eggNOG" id="COG0746">
    <property type="taxonomic scope" value="Bacteria"/>
</dbReference>
<dbReference type="Proteomes" id="UP000001175">
    <property type="component" value="Chromosome"/>
</dbReference>
<dbReference type="GO" id="GO:0005737">
    <property type="term" value="C:cytoplasm"/>
    <property type="evidence" value="ECO:0007669"/>
    <property type="project" value="UniProtKB-SubCell"/>
</dbReference>
<dbReference type="GO" id="GO:0005525">
    <property type="term" value="F:GTP binding"/>
    <property type="evidence" value="ECO:0007669"/>
    <property type="project" value="UniProtKB-UniRule"/>
</dbReference>
<dbReference type="GO" id="GO:0046872">
    <property type="term" value="F:metal ion binding"/>
    <property type="evidence" value="ECO:0007669"/>
    <property type="project" value="UniProtKB-KW"/>
</dbReference>
<dbReference type="GO" id="GO:0061603">
    <property type="term" value="F:molybdenum cofactor guanylyltransferase activity"/>
    <property type="evidence" value="ECO:0007669"/>
    <property type="project" value="UniProtKB-EC"/>
</dbReference>
<dbReference type="GO" id="GO:0006777">
    <property type="term" value="P:Mo-molybdopterin cofactor biosynthetic process"/>
    <property type="evidence" value="ECO:0007669"/>
    <property type="project" value="UniProtKB-KW"/>
</dbReference>
<dbReference type="CDD" id="cd02503">
    <property type="entry name" value="MobA"/>
    <property type="match status" value="1"/>
</dbReference>
<dbReference type="Gene3D" id="3.90.550.10">
    <property type="entry name" value="Spore Coat Polysaccharide Biosynthesis Protein SpsA, Chain A"/>
    <property type="match status" value="1"/>
</dbReference>
<dbReference type="HAMAP" id="MF_00316">
    <property type="entry name" value="MobA"/>
    <property type="match status" value="1"/>
</dbReference>
<dbReference type="InterPro" id="IPR025877">
    <property type="entry name" value="MobA-like_NTP_Trfase"/>
</dbReference>
<dbReference type="InterPro" id="IPR013482">
    <property type="entry name" value="Molybde_CF_guanTrfase"/>
</dbReference>
<dbReference type="InterPro" id="IPR029044">
    <property type="entry name" value="Nucleotide-diphossugar_trans"/>
</dbReference>
<dbReference type="NCBIfam" id="NF002741">
    <property type="entry name" value="PRK02726.1"/>
    <property type="match status" value="1"/>
</dbReference>
<dbReference type="PANTHER" id="PTHR19136">
    <property type="entry name" value="MOLYBDENUM COFACTOR GUANYLYLTRANSFERASE"/>
    <property type="match status" value="1"/>
</dbReference>
<dbReference type="PANTHER" id="PTHR19136:SF81">
    <property type="entry name" value="MOLYBDENUM COFACTOR GUANYLYLTRANSFERASE"/>
    <property type="match status" value="1"/>
</dbReference>
<dbReference type="Pfam" id="PF12804">
    <property type="entry name" value="NTP_transf_3"/>
    <property type="match status" value="1"/>
</dbReference>
<dbReference type="SUPFAM" id="SSF53448">
    <property type="entry name" value="Nucleotide-diphospho-sugar transferases"/>
    <property type="match status" value="1"/>
</dbReference>
<gene>
    <name evidence="1" type="primary">mobA</name>
    <name type="ordered locus">syc0361_d</name>
</gene>
<accession>Q5N568</accession>
<proteinExistence type="inferred from homology"/>
<name>MOBA_SYNP6</name>
<comment type="function">
    <text evidence="1">Transfers a GMP moiety from GTP to Mo-molybdopterin (Mo-MPT) cofactor (Moco or molybdenum cofactor) to form Mo-molybdopterin guanine dinucleotide (Mo-MGD) cofactor.</text>
</comment>
<comment type="catalytic activity">
    <reaction evidence="1">
        <text>Mo-molybdopterin + GTP + H(+) = Mo-molybdopterin guanine dinucleotide + diphosphate</text>
        <dbReference type="Rhea" id="RHEA:34243"/>
        <dbReference type="ChEBI" id="CHEBI:15378"/>
        <dbReference type="ChEBI" id="CHEBI:33019"/>
        <dbReference type="ChEBI" id="CHEBI:37565"/>
        <dbReference type="ChEBI" id="CHEBI:71302"/>
        <dbReference type="ChEBI" id="CHEBI:71310"/>
        <dbReference type="EC" id="2.7.7.77"/>
    </reaction>
</comment>
<comment type="cofactor">
    <cofactor evidence="1">
        <name>Mg(2+)</name>
        <dbReference type="ChEBI" id="CHEBI:18420"/>
    </cofactor>
</comment>
<comment type="subcellular location">
    <subcellularLocation>
        <location evidence="1">Cytoplasm</location>
    </subcellularLocation>
</comment>
<comment type="domain">
    <text evidence="1">The N-terminal domain determines nucleotide recognition and specific binding, while the C-terminal domain determines the specific binding to the target protein.</text>
</comment>
<comment type="similarity">
    <text evidence="1">Belongs to the MobA family.</text>
</comment>
<feature type="chain" id="PRO_1000019161" description="Probable molybdenum cofactor guanylyltransferase">
    <location>
        <begin position="1"/>
        <end position="194"/>
    </location>
</feature>
<feature type="binding site" evidence="1">
    <location>
        <begin position="8"/>
        <end position="10"/>
    </location>
    <ligand>
        <name>GTP</name>
        <dbReference type="ChEBI" id="CHEBI:37565"/>
    </ligand>
</feature>
<feature type="binding site" evidence="1">
    <location>
        <position position="20"/>
    </location>
    <ligand>
        <name>GTP</name>
        <dbReference type="ChEBI" id="CHEBI:37565"/>
    </ligand>
</feature>
<feature type="binding site" evidence="1">
    <location>
        <position position="99"/>
    </location>
    <ligand>
        <name>GTP</name>
        <dbReference type="ChEBI" id="CHEBI:37565"/>
    </ligand>
</feature>
<feature type="binding site" evidence="1">
    <location>
        <position position="99"/>
    </location>
    <ligand>
        <name>Mg(2+)</name>
        <dbReference type="ChEBI" id="CHEBI:18420"/>
    </ligand>
</feature>
<keyword id="KW-0963">Cytoplasm</keyword>
<keyword id="KW-0342">GTP-binding</keyword>
<keyword id="KW-0460">Magnesium</keyword>
<keyword id="KW-0479">Metal-binding</keyword>
<keyword id="KW-0501">Molybdenum cofactor biosynthesis</keyword>
<keyword id="KW-0547">Nucleotide-binding</keyword>
<keyword id="KW-0808">Transferase</keyword>